<protein>
    <recommendedName>
        <fullName evidence="1">Phosphoglycerate kinase</fullName>
        <ecNumber evidence="1">2.7.2.3</ecNumber>
    </recommendedName>
</protein>
<proteinExistence type="inferred from homology"/>
<feature type="chain" id="PRO_1000096345" description="Phosphoglycerate kinase">
    <location>
        <begin position="1"/>
        <end position="399"/>
    </location>
</feature>
<feature type="binding site" evidence="1">
    <location>
        <begin position="22"/>
        <end position="24"/>
    </location>
    <ligand>
        <name>substrate</name>
    </ligand>
</feature>
<feature type="binding site" evidence="1">
    <location>
        <position position="38"/>
    </location>
    <ligand>
        <name>substrate</name>
    </ligand>
</feature>
<feature type="binding site" evidence="1">
    <location>
        <begin position="61"/>
        <end position="64"/>
    </location>
    <ligand>
        <name>substrate</name>
    </ligand>
</feature>
<feature type="binding site" evidence="1">
    <location>
        <position position="120"/>
    </location>
    <ligand>
        <name>substrate</name>
    </ligand>
</feature>
<feature type="binding site" evidence="1">
    <location>
        <position position="153"/>
    </location>
    <ligand>
        <name>substrate</name>
    </ligand>
</feature>
<feature type="binding site" evidence="1">
    <location>
        <position position="204"/>
    </location>
    <ligand>
        <name>ATP</name>
        <dbReference type="ChEBI" id="CHEBI:30616"/>
    </ligand>
</feature>
<feature type="binding site" evidence="1">
    <location>
        <position position="326"/>
    </location>
    <ligand>
        <name>ATP</name>
        <dbReference type="ChEBI" id="CHEBI:30616"/>
    </ligand>
</feature>
<feature type="binding site" evidence="1">
    <location>
        <begin position="352"/>
        <end position="355"/>
    </location>
    <ligand>
        <name>ATP</name>
        <dbReference type="ChEBI" id="CHEBI:30616"/>
    </ligand>
</feature>
<organism>
    <name type="scientific">Citrifermentans bemidjiense (strain ATCC BAA-1014 / DSM 16622 / JCM 12645 / Bem)</name>
    <name type="common">Geobacter bemidjiensis</name>
    <dbReference type="NCBI Taxonomy" id="404380"/>
    <lineage>
        <taxon>Bacteria</taxon>
        <taxon>Pseudomonadati</taxon>
        <taxon>Thermodesulfobacteriota</taxon>
        <taxon>Desulfuromonadia</taxon>
        <taxon>Geobacterales</taxon>
        <taxon>Geobacteraceae</taxon>
        <taxon>Citrifermentans</taxon>
    </lineage>
</organism>
<dbReference type="EC" id="2.7.2.3" evidence="1"/>
<dbReference type="EMBL" id="CP001124">
    <property type="protein sequence ID" value="ACH39349.1"/>
    <property type="molecule type" value="Genomic_DNA"/>
</dbReference>
<dbReference type="RefSeq" id="WP_012530771.1">
    <property type="nucleotide sequence ID" value="NC_011146.1"/>
</dbReference>
<dbReference type="SMR" id="B5EF40"/>
<dbReference type="STRING" id="404380.Gbem_2337"/>
<dbReference type="KEGG" id="gbm:Gbem_2337"/>
<dbReference type="eggNOG" id="COG0126">
    <property type="taxonomic scope" value="Bacteria"/>
</dbReference>
<dbReference type="HOGENOM" id="CLU_025427_0_2_7"/>
<dbReference type="OrthoDB" id="9808460at2"/>
<dbReference type="UniPathway" id="UPA00109">
    <property type="reaction ID" value="UER00185"/>
</dbReference>
<dbReference type="Proteomes" id="UP000008825">
    <property type="component" value="Chromosome"/>
</dbReference>
<dbReference type="GO" id="GO:0005829">
    <property type="term" value="C:cytosol"/>
    <property type="evidence" value="ECO:0007669"/>
    <property type="project" value="TreeGrafter"/>
</dbReference>
<dbReference type="GO" id="GO:0043531">
    <property type="term" value="F:ADP binding"/>
    <property type="evidence" value="ECO:0007669"/>
    <property type="project" value="TreeGrafter"/>
</dbReference>
<dbReference type="GO" id="GO:0005524">
    <property type="term" value="F:ATP binding"/>
    <property type="evidence" value="ECO:0007669"/>
    <property type="project" value="UniProtKB-KW"/>
</dbReference>
<dbReference type="GO" id="GO:0004618">
    <property type="term" value="F:phosphoglycerate kinase activity"/>
    <property type="evidence" value="ECO:0007669"/>
    <property type="project" value="UniProtKB-UniRule"/>
</dbReference>
<dbReference type="GO" id="GO:0006094">
    <property type="term" value="P:gluconeogenesis"/>
    <property type="evidence" value="ECO:0007669"/>
    <property type="project" value="TreeGrafter"/>
</dbReference>
<dbReference type="GO" id="GO:0006096">
    <property type="term" value="P:glycolytic process"/>
    <property type="evidence" value="ECO:0007669"/>
    <property type="project" value="UniProtKB-UniRule"/>
</dbReference>
<dbReference type="CDD" id="cd00318">
    <property type="entry name" value="Phosphoglycerate_kinase"/>
    <property type="match status" value="1"/>
</dbReference>
<dbReference type="FunFam" id="3.40.50.1260:FF:000003">
    <property type="entry name" value="Phosphoglycerate kinase"/>
    <property type="match status" value="1"/>
</dbReference>
<dbReference type="FunFam" id="3.40.50.1260:FF:000006">
    <property type="entry name" value="Phosphoglycerate kinase"/>
    <property type="match status" value="1"/>
</dbReference>
<dbReference type="Gene3D" id="3.40.50.1260">
    <property type="entry name" value="Phosphoglycerate kinase, N-terminal domain"/>
    <property type="match status" value="2"/>
</dbReference>
<dbReference type="HAMAP" id="MF_00145">
    <property type="entry name" value="Phosphoglyc_kinase"/>
    <property type="match status" value="1"/>
</dbReference>
<dbReference type="InterPro" id="IPR001576">
    <property type="entry name" value="Phosphoglycerate_kinase"/>
</dbReference>
<dbReference type="InterPro" id="IPR015824">
    <property type="entry name" value="Phosphoglycerate_kinase_N"/>
</dbReference>
<dbReference type="InterPro" id="IPR036043">
    <property type="entry name" value="Phosphoglycerate_kinase_sf"/>
</dbReference>
<dbReference type="PANTHER" id="PTHR11406">
    <property type="entry name" value="PHOSPHOGLYCERATE KINASE"/>
    <property type="match status" value="1"/>
</dbReference>
<dbReference type="PANTHER" id="PTHR11406:SF23">
    <property type="entry name" value="PHOSPHOGLYCERATE KINASE 1, CHLOROPLASTIC-RELATED"/>
    <property type="match status" value="1"/>
</dbReference>
<dbReference type="Pfam" id="PF00162">
    <property type="entry name" value="PGK"/>
    <property type="match status" value="1"/>
</dbReference>
<dbReference type="PIRSF" id="PIRSF000724">
    <property type="entry name" value="Pgk"/>
    <property type="match status" value="1"/>
</dbReference>
<dbReference type="PRINTS" id="PR00477">
    <property type="entry name" value="PHGLYCKINASE"/>
</dbReference>
<dbReference type="SUPFAM" id="SSF53748">
    <property type="entry name" value="Phosphoglycerate kinase"/>
    <property type="match status" value="1"/>
</dbReference>
<reference key="1">
    <citation type="submission" date="2008-07" db="EMBL/GenBank/DDBJ databases">
        <title>Complete sequence of Geobacter bemidjiensis BEM.</title>
        <authorList>
            <consortium name="US DOE Joint Genome Institute"/>
            <person name="Lucas S."/>
            <person name="Copeland A."/>
            <person name="Lapidus A."/>
            <person name="Glavina del Rio T."/>
            <person name="Dalin E."/>
            <person name="Tice H."/>
            <person name="Bruce D."/>
            <person name="Goodwin L."/>
            <person name="Pitluck S."/>
            <person name="Kiss H."/>
            <person name="Brettin T."/>
            <person name="Detter J.C."/>
            <person name="Han C."/>
            <person name="Kuske C.R."/>
            <person name="Schmutz J."/>
            <person name="Larimer F."/>
            <person name="Land M."/>
            <person name="Hauser L."/>
            <person name="Kyrpides N."/>
            <person name="Lykidis A."/>
            <person name="Lovley D."/>
            <person name="Richardson P."/>
        </authorList>
    </citation>
    <scope>NUCLEOTIDE SEQUENCE [LARGE SCALE GENOMIC DNA]</scope>
    <source>
        <strain>ATCC BAA-1014 / DSM 16622 / JCM 12645 / Bem</strain>
    </source>
</reference>
<comment type="catalytic activity">
    <reaction evidence="1">
        <text>(2R)-3-phosphoglycerate + ATP = (2R)-3-phospho-glyceroyl phosphate + ADP</text>
        <dbReference type="Rhea" id="RHEA:14801"/>
        <dbReference type="ChEBI" id="CHEBI:30616"/>
        <dbReference type="ChEBI" id="CHEBI:57604"/>
        <dbReference type="ChEBI" id="CHEBI:58272"/>
        <dbReference type="ChEBI" id="CHEBI:456216"/>
        <dbReference type="EC" id="2.7.2.3"/>
    </reaction>
</comment>
<comment type="pathway">
    <text evidence="1">Carbohydrate degradation; glycolysis; pyruvate from D-glyceraldehyde 3-phosphate: step 2/5.</text>
</comment>
<comment type="subunit">
    <text evidence="1">Monomer.</text>
</comment>
<comment type="subcellular location">
    <subcellularLocation>
        <location evidence="1">Cytoplasm</location>
    </subcellularLocation>
</comment>
<comment type="similarity">
    <text evidence="1">Belongs to the phosphoglycerate kinase family.</text>
</comment>
<sequence length="399" mass="43489">MSIRYIDEIENLSGKKLFMRVDFNVPLDDHQNITEDTRIRAVLPSINYALDQKAKIILASHLGRPKGERKEKYSMAPAAKRLSRLLGKEVKLASDCIGDEVKAMINAMQPGDVIMLENVRFYAGEEKNDADFAKALANDCDVYVNDAFAVSHRAHASVEAITNCFPVVAAGFLMKNEMNYFEKAMKNPIRPLVAILGGAKVSGKIEVLENLCDKVDKIIIGGGMAFTFLKGMGYNVGKSLVEDNLIDTAMKTYEKARAQGVKFYLPVDCVVADQFNPAAETKVCPIQEIPEGWMALDVGPATVTLFTEALQNAKTIVWNGPMGVFEMDAFSRGTFAMVSAVANSYALTIVGGGDTDVAVHRAGEYAKISYISTGGGAFLELLEGKKLPGIKVLEDKGHQ</sequence>
<keyword id="KW-0067">ATP-binding</keyword>
<keyword id="KW-0963">Cytoplasm</keyword>
<keyword id="KW-0324">Glycolysis</keyword>
<keyword id="KW-0418">Kinase</keyword>
<keyword id="KW-0547">Nucleotide-binding</keyword>
<keyword id="KW-1185">Reference proteome</keyword>
<keyword id="KW-0808">Transferase</keyword>
<name>PGK_CITBB</name>
<evidence type="ECO:0000255" key="1">
    <source>
        <dbReference type="HAMAP-Rule" id="MF_00145"/>
    </source>
</evidence>
<accession>B5EF40</accession>
<gene>
    <name evidence="1" type="primary">pgk</name>
    <name type="ordered locus">Gbem_2337</name>
</gene>